<organism>
    <name type="scientific">Mus musculus</name>
    <name type="common">Mouse</name>
    <dbReference type="NCBI Taxonomy" id="10090"/>
    <lineage>
        <taxon>Eukaryota</taxon>
        <taxon>Metazoa</taxon>
        <taxon>Chordata</taxon>
        <taxon>Craniata</taxon>
        <taxon>Vertebrata</taxon>
        <taxon>Euteleostomi</taxon>
        <taxon>Mammalia</taxon>
        <taxon>Eutheria</taxon>
        <taxon>Euarchontoglires</taxon>
        <taxon>Glires</taxon>
        <taxon>Rodentia</taxon>
        <taxon>Myomorpha</taxon>
        <taxon>Muroidea</taxon>
        <taxon>Muridae</taxon>
        <taxon>Murinae</taxon>
        <taxon>Mus</taxon>
        <taxon>Mus</taxon>
    </lineage>
</organism>
<dbReference type="EMBL" id="AJ002306">
    <property type="protein sequence ID" value="CAA05323.1"/>
    <property type="molecule type" value="mRNA"/>
</dbReference>
<dbReference type="EMBL" id="AK002972">
    <property type="protein sequence ID" value="BAB22487.1"/>
    <property type="molecule type" value="mRNA"/>
</dbReference>
<dbReference type="EMBL" id="AK010442">
    <property type="protein sequence ID" value="BAB26943.1"/>
    <property type="molecule type" value="mRNA"/>
</dbReference>
<dbReference type="EMBL" id="AK044007">
    <property type="protein sequence ID" value="BAC31736.1"/>
    <property type="molecule type" value="mRNA"/>
</dbReference>
<dbReference type="EMBL" id="BC138728">
    <property type="protein sequence ID" value="AAI38729.1"/>
    <property type="molecule type" value="mRNA"/>
</dbReference>
<dbReference type="EMBL" id="BC138729">
    <property type="protein sequence ID" value="AAI38730.1"/>
    <property type="molecule type" value="mRNA"/>
</dbReference>
<dbReference type="CCDS" id="CCDS27657.1">
    <molecule id="O55100-1"/>
</dbReference>
<dbReference type="CCDS" id="CCDS27658.1">
    <molecule id="O55100-2"/>
</dbReference>
<dbReference type="RefSeq" id="NP_033329.1">
    <molecule id="O55100-2"/>
    <property type="nucleotide sequence ID" value="NM_009303.3"/>
</dbReference>
<dbReference type="RefSeq" id="NP_997591.1">
    <molecule id="O55100-1"/>
    <property type="nucleotide sequence ID" value="NM_207708.2"/>
</dbReference>
<dbReference type="SMR" id="O55100"/>
<dbReference type="BioGRID" id="203605">
    <property type="interactions" value="7"/>
</dbReference>
<dbReference type="FunCoup" id="O55100">
    <property type="interactions" value="288"/>
</dbReference>
<dbReference type="STRING" id="10090.ENSMUSP00000009727"/>
<dbReference type="TCDB" id="9.B.130.2.5">
    <property type="family name" value="the tetraspan vesicle membrane protein (tvp) family"/>
</dbReference>
<dbReference type="GlyGen" id="O55100">
    <property type="glycosylation" value="2 sites, 1 O-linked glycan (1 site)"/>
</dbReference>
<dbReference type="iPTMnet" id="O55100"/>
<dbReference type="PhosphoSitePlus" id="O55100"/>
<dbReference type="SwissPalm" id="O55100"/>
<dbReference type="PaxDb" id="10090-ENSMUSP00000009727"/>
<dbReference type="PeptideAtlas" id="O55100"/>
<dbReference type="ProteomicsDB" id="257535">
    <molecule id="O55100-1"/>
</dbReference>
<dbReference type="ProteomicsDB" id="257536">
    <molecule id="O55100-2"/>
</dbReference>
<dbReference type="Antibodypedia" id="26612">
    <property type="antibodies" value="186 antibodies from 30 providers"/>
</dbReference>
<dbReference type="DNASU" id="20972"/>
<dbReference type="Ensembl" id="ENSMUST00000009727.12">
    <molecule id="O55100-1"/>
    <property type="protein sequence ID" value="ENSMUSP00000009727.6"/>
    <property type="gene ID" value="ENSMUSG00000022415.13"/>
</dbReference>
<dbReference type="Ensembl" id="ENSMUST00000009728.13">
    <molecule id="O55100-2"/>
    <property type="protein sequence ID" value="ENSMUSP00000009728.7"/>
    <property type="gene ID" value="ENSMUSG00000022415.13"/>
</dbReference>
<dbReference type="GeneID" id="20972"/>
<dbReference type="KEGG" id="mmu:20972"/>
<dbReference type="UCSC" id="uc007wvd.1">
    <molecule id="O55100-1"/>
    <property type="organism name" value="mouse"/>
</dbReference>
<dbReference type="AGR" id="MGI:1328323"/>
<dbReference type="CTD" id="9145"/>
<dbReference type="MGI" id="MGI:1328323">
    <property type="gene designation" value="Syngr1"/>
</dbReference>
<dbReference type="VEuPathDB" id="HostDB:ENSMUSG00000022415"/>
<dbReference type="eggNOG" id="KOG4016">
    <property type="taxonomic scope" value="Eukaryota"/>
</dbReference>
<dbReference type="GeneTree" id="ENSGT00950000182935"/>
<dbReference type="HOGENOM" id="CLU_079186_1_0_1"/>
<dbReference type="InParanoid" id="O55100"/>
<dbReference type="OMA" id="FYLWSQW"/>
<dbReference type="OrthoDB" id="10041611at2759"/>
<dbReference type="PhylomeDB" id="O55100"/>
<dbReference type="TreeFam" id="TF320995"/>
<dbReference type="Reactome" id="R-MMU-6798695">
    <property type="pathway name" value="Neutrophil degranulation"/>
</dbReference>
<dbReference type="BioGRID-ORCS" id="20972">
    <property type="hits" value="4 hits in 75 CRISPR screens"/>
</dbReference>
<dbReference type="ChiTaRS" id="Syngr1">
    <property type="organism name" value="mouse"/>
</dbReference>
<dbReference type="PRO" id="PR:O55100"/>
<dbReference type="Proteomes" id="UP000000589">
    <property type="component" value="Chromosome 15"/>
</dbReference>
<dbReference type="RNAct" id="O55100">
    <property type="molecule type" value="protein"/>
</dbReference>
<dbReference type="Bgee" id="ENSMUSG00000022415">
    <property type="expression patterns" value="Expressed in dentate gyrus of hippocampal formation granule cell and 208 other cell types or tissues"/>
</dbReference>
<dbReference type="ExpressionAtlas" id="O55100">
    <property type="expression patterns" value="baseline and differential"/>
</dbReference>
<dbReference type="GO" id="GO:0042470">
    <property type="term" value="C:melanosome"/>
    <property type="evidence" value="ECO:0007669"/>
    <property type="project" value="UniProtKB-SubCell"/>
</dbReference>
<dbReference type="GO" id="GO:0098685">
    <property type="term" value="C:Schaffer collateral - CA1 synapse"/>
    <property type="evidence" value="ECO:0000314"/>
    <property type="project" value="SynGO"/>
</dbReference>
<dbReference type="GO" id="GO:0008021">
    <property type="term" value="C:synaptic vesicle"/>
    <property type="evidence" value="ECO:0000266"/>
    <property type="project" value="MGI"/>
</dbReference>
<dbReference type="GO" id="GO:0030672">
    <property type="term" value="C:synaptic vesicle membrane"/>
    <property type="evidence" value="ECO:0007669"/>
    <property type="project" value="UniProtKB-SubCell"/>
</dbReference>
<dbReference type="GO" id="GO:1990830">
    <property type="term" value="P:cellular response to leukemia inhibitory factor"/>
    <property type="evidence" value="ECO:0000270"/>
    <property type="project" value="MGI"/>
</dbReference>
<dbReference type="GO" id="GO:0050804">
    <property type="term" value="P:modulation of chemical synaptic transmission"/>
    <property type="evidence" value="ECO:0000314"/>
    <property type="project" value="SynGO"/>
</dbReference>
<dbReference type="GO" id="GO:0006605">
    <property type="term" value="P:protein targeting"/>
    <property type="evidence" value="ECO:0000266"/>
    <property type="project" value="MGI"/>
</dbReference>
<dbReference type="GO" id="GO:0045055">
    <property type="term" value="P:regulated exocytosis"/>
    <property type="evidence" value="ECO:0000250"/>
    <property type="project" value="UniProtKB"/>
</dbReference>
<dbReference type="GO" id="GO:0048169">
    <property type="term" value="P:regulation of long-term neuronal synaptic plasticity"/>
    <property type="evidence" value="ECO:0000315"/>
    <property type="project" value="UniProtKB"/>
</dbReference>
<dbReference type="GO" id="GO:0048172">
    <property type="term" value="P:regulation of short-term neuronal synaptic plasticity"/>
    <property type="evidence" value="ECO:0000315"/>
    <property type="project" value="UniProtKB"/>
</dbReference>
<dbReference type="GO" id="GO:0048499">
    <property type="term" value="P:synaptic vesicle membrane organization"/>
    <property type="evidence" value="ECO:0000250"/>
    <property type="project" value="UniProtKB"/>
</dbReference>
<dbReference type="InterPro" id="IPR008253">
    <property type="entry name" value="Marvel"/>
</dbReference>
<dbReference type="InterPro" id="IPR016579">
    <property type="entry name" value="Synaptogyrin"/>
</dbReference>
<dbReference type="PANTHER" id="PTHR10838">
    <property type="entry name" value="SYNAPTOGYRIN"/>
    <property type="match status" value="1"/>
</dbReference>
<dbReference type="PANTHER" id="PTHR10838:SF7">
    <property type="entry name" value="SYNAPTOGYRIN-1"/>
    <property type="match status" value="1"/>
</dbReference>
<dbReference type="Pfam" id="PF01284">
    <property type="entry name" value="MARVEL"/>
    <property type="match status" value="1"/>
</dbReference>
<dbReference type="PIRSF" id="PIRSF011282">
    <property type="entry name" value="Synaptogyrin"/>
    <property type="match status" value="1"/>
</dbReference>
<dbReference type="PROSITE" id="PS51225">
    <property type="entry name" value="MARVEL"/>
    <property type="match status" value="1"/>
</dbReference>
<comment type="function">
    <text evidence="2 6">May play a role in regulated exocytosis. Modulates the localization of synaptophysin/SYP into synaptic-like microvesicles and may therefore play a role in synaptic-like microvesicle formation and/or maturation (By similarity). Involved in the regulation of short-term and long-term synaptic plasticity (PubMed:10595519).</text>
</comment>
<comment type="subcellular location">
    <subcellularLocation>
        <location evidence="2">Cytoplasmic vesicle</location>
        <location evidence="2">Secretory vesicle</location>
        <location evidence="2">Synaptic vesicle membrane</location>
        <topology evidence="2">Multi-pass membrane protein</topology>
    </subcellularLocation>
    <subcellularLocation>
        <location evidence="1">Melanosome</location>
    </subcellularLocation>
</comment>
<comment type="alternative products">
    <event type="alternative splicing"/>
    <isoform>
        <id>O55100-1</id>
        <name>1A</name>
        <sequence type="displayed"/>
    </isoform>
    <isoform>
        <id>O55100-2</id>
        <name>1B</name>
        <sequence type="described" ref="VSP_006333"/>
    </isoform>
</comment>
<comment type="disruption phenotype">
    <text evidence="6">Mice lacking both Syngr1 and Syp show normal brain structure and composition, but impaired short-term and long-term synaptic plasticity.</text>
</comment>
<comment type="similarity">
    <text evidence="9">Belongs to the synaptogyrin family.</text>
</comment>
<sequence length="234" mass="25653">MEGGAYGAGKAGGAFDPYTLVRQPHTILRVVSWVFSIVVFGSIVNEGYLNNPEEEEEFCIYNRNPNACSYGVTVGVLAFLTCLLYLALDVYFPQISSVKDRKKAVLSDIGVSAFWAFFWFVGFCFLANQWQVSKPKDNPLNEGTDAARAAIAFSFFSIFTWAGQAVLAFQRYQIGADSALFSQDYMDPSQDSSMPYAPYVEPSAGSDPAGMGGTYQHPANAFDAEPQGYQSQGY</sequence>
<feature type="chain" id="PRO_0000183991" description="Synaptogyrin-1">
    <location>
        <begin position="1"/>
        <end position="234"/>
    </location>
</feature>
<feature type="topological domain" description="Cytoplasmic" evidence="2">
    <location>
        <begin position="1"/>
        <end position="23"/>
    </location>
</feature>
<feature type="transmembrane region" description="Helical" evidence="3">
    <location>
        <begin position="24"/>
        <end position="44"/>
    </location>
</feature>
<feature type="topological domain" description="Lumenal" evidence="2">
    <location>
        <begin position="45"/>
        <end position="71"/>
    </location>
</feature>
<feature type="transmembrane region" description="Helical" evidence="3">
    <location>
        <begin position="72"/>
        <end position="92"/>
    </location>
</feature>
<feature type="topological domain" description="Cytoplasmic" evidence="2">
    <location>
        <begin position="93"/>
        <end position="103"/>
    </location>
</feature>
<feature type="transmembrane region" description="Helical" evidence="3">
    <location>
        <begin position="104"/>
        <end position="124"/>
    </location>
</feature>
<feature type="topological domain" description="Lumenal" evidence="2">
    <location>
        <begin position="125"/>
        <end position="148"/>
    </location>
</feature>
<feature type="transmembrane region" description="Helical" evidence="3">
    <location>
        <begin position="149"/>
        <end position="169"/>
    </location>
</feature>
<feature type="topological domain" description="Cytoplasmic" evidence="2">
    <location>
        <begin position="170"/>
        <end position="234"/>
    </location>
</feature>
<feature type="domain" description="MARVEL" evidence="4">
    <location>
        <begin position="20"/>
        <end position="173"/>
    </location>
</feature>
<feature type="region of interest" description="Disordered" evidence="5">
    <location>
        <begin position="201"/>
        <end position="234"/>
    </location>
</feature>
<feature type="modified residue" description="N-acetylmethionine" evidence="1">
    <location>
        <position position="1"/>
    </location>
</feature>
<feature type="splice variant" id="VSP_006333" description="In isoform 1B." evidence="7 8">
    <original>AGQAVLAFQRYQIGADSALFSQDYMDPSQDSSMPYAPYVEPSAGSDPAGMGGTYQHPANAFDAEPQGYQSQGY</original>
    <variation>SLTAALAVRRFKELTFQEEYNTLFPASAQP</variation>
    <location>
        <begin position="162"/>
        <end position="234"/>
    </location>
</feature>
<reference key="1">
    <citation type="journal article" date="1998" name="Hum. Genet.">
        <title>Characterization of the human synaptogyrin gene family.</title>
        <authorList>
            <person name="Kedra D."/>
            <person name="Pan H.-Q."/>
            <person name="Seroussi E."/>
            <person name="Fransson I."/>
            <person name="Guilbaud C."/>
            <person name="Collins J.E."/>
            <person name="Dunham I."/>
            <person name="Blennow E."/>
            <person name="Roe B.A."/>
            <person name="Piehl F."/>
            <person name="Dumanski J.P."/>
        </authorList>
    </citation>
    <scope>NUCLEOTIDE SEQUENCE [MRNA] (ISOFORM 1B)</scope>
</reference>
<reference key="2">
    <citation type="journal article" date="2005" name="Science">
        <title>The transcriptional landscape of the mammalian genome.</title>
        <authorList>
            <person name="Carninci P."/>
            <person name="Kasukawa T."/>
            <person name="Katayama S."/>
            <person name="Gough J."/>
            <person name="Frith M.C."/>
            <person name="Maeda N."/>
            <person name="Oyama R."/>
            <person name="Ravasi T."/>
            <person name="Lenhard B."/>
            <person name="Wells C."/>
            <person name="Kodzius R."/>
            <person name="Shimokawa K."/>
            <person name="Bajic V.B."/>
            <person name="Brenner S.E."/>
            <person name="Batalov S."/>
            <person name="Forrest A.R."/>
            <person name="Zavolan M."/>
            <person name="Davis M.J."/>
            <person name="Wilming L.G."/>
            <person name="Aidinis V."/>
            <person name="Allen J.E."/>
            <person name="Ambesi-Impiombato A."/>
            <person name="Apweiler R."/>
            <person name="Aturaliya R.N."/>
            <person name="Bailey T.L."/>
            <person name="Bansal M."/>
            <person name="Baxter L."/>
            <person name="Beisel K.W."/>
            <person name="Bersano T."/>
            <person name="Bono H."/>
            <person name="Chalk A.M."/>
            <person name="Chiu K.P."/>
            <person name="Choudhary V."/>
            <person name="Christoffels A."/>
            <person name="Clutterbuck D.R."/>
            <person name="Crowe M.L."/>
            <person name="Dalla E."/>
            <person name="Dalrymple B.P."/>
            <person name="de Bono B."/>
            <person name="Della Gatta G."/>
            <person name="di Bernardo D."/>
            <person name="Down T."/>
            <person name="Engstrom P."/>
            <person name="Fagiolini M."/>
            <person name="Faulkner G."/>
            <person name="Fletcher C.F."/>
            <person name="Fukushima T."/>
            <person name="Furuno M."/>
            <person name="Futaki S."/>
            <person name="Gariboldi M."/>
            <person name="Georgii-Hemming P."/>
            <person name="Gingeras T.R."/>
            <person name="Gojobori T."/>
            <person name="Green R.E."/>
            <person name="Gustincich S."/>
            <person name="Harbers M."/>
            <person name="Hayashi Y."/>
            <person name="Hensch T.K."/>
            <person name="Hirokawa N."/>
            <person name="Hill D."/>
            <person name="Huminiecki L."/>
            <person name="Iacono M."/>
            <person name="Ikeo K."/>
            <person name="Iwama A."/>
            <person name="Ishikawa T."/>
            <person name="Jakt M."/>
            <person name="Kanapin A."/>
            <person name="Katoh M."/>
            <person name="Kawasawa Y."/>
            <person name="Kelso J."/>
            <person name="Kitamura H."/>
            <person name="Kitano H."/>
            <person name="Kollias G."/>
            <person name="Krishnan S.P."/>
            <person name="Kruger A."/>
            <person name="Kummerfeld S.K."/>
            <person name="Kurochkin I.V."/>
            <person name="Lareau L.F."/>
            <person name="Lazarevic D."/>
            <person name="Lipovich L."/>
            <person name="Liu J."/>
            <person name="Liuni S."/>
            <person name="McWilliam S."/>
            <person name="Madan Babu M."/>
            <person name="Madera M."/>
            <person name="Marchionni L."/>
            <person name="Matsuda H."/>
            <person name="Matsuzawa S."/>
            <person name="Miki H."/>
            <person name="Mignone F."/>
            <person name="Miyake S."/>
            <person name="Morris K."/>
            <person name="Mottagui-Tabar S."/>
            <person name="Mulder N."/>
            <person name="Nakano N."/>
            <person name="Nakauchi H."/>
            <person name="Ng P."/>
            <person name="Nilsson R."/>
            <person name="Nishiguchi S."/>
            <person name="Nishikawa S."/>
            <person name="Nori F."/>
            <person name="Ohara O."/>
            <person name="Okazaki Y."/>
            <person name="Orlando V."/>
            <person name="Pang K.C."/>
            <person name="Pavan W.J."/>
            <person name="Pavesi G."/>
            <person name="Pesole G."/>
            <person name="Petrovsky N."/>
            <person name="Piazza S."/>
            <person name="Reed J."/>
            <person name="Reid J.F."/>
            <person name="Ring B.Z."/>
            <person name="Ringwald M."/>
            <person name="Rost B."/>
            <person name="Ruan Y."/>
            <person name="Salzberg S.L."/>
            <person name="Sandelin A."/>
            <person name="Schneider C."/>
            <person name="Schoenbach C."/>
            <person name="Sekiguchi K."/>
            <person name="Semple C.A."/>
            <person name="Seno S."/>
            <person name="Sessa L."/>
            <person name="Sheng Y."/>
            <person name="Shibata Y."/>
            <person name="Shimada H."/>
            <person name="Shimada K."/>
            <person name="Silva D."/>
            <person name="Sinclair B."/>
            <person name="Sperling S."/>
            <person name="Stupka E."/>
            <person name="Sugiura K."/>
            <person name="Sultana R."/>
            <person name="Takenaka Y."/>
            <person name="Taki K."/>
            <person name="Tammoja K."/>
            <person name="Tan S.L."/>
            <person name="Tang S."/>
            <person name="Taylor M.S."/>
            <person name="Tegner J."/>
            <person name="Teichmann S.A."/>
            <person name="Ueda H.R."/>
            <person name="van Nimwegen E."/>
            <person name="Verardo R."/>
            <person name="Wei C.L."/>
            <person name="Yagi K."/>
            <person name="Yamanishi H."/>
            <person name="Zabarovsky E."/>
            <person name="Zhu S."/>
            <person name="Zimmer A."/>
            <person name="Hide W."/>
            <person name="Bult C."/>
            <person name="Grimmond S.M."/>
            <person name="Teasdale R.D."/>
            <person name="Liu E.T."/>
            <person name="Brusic V."/>
            <person name="Quackenbush J."/>
            <person name="Wahlestedt C."/>
            <person name="Mattick J.S."/>
            <person name="Hume D.A."/>
            <person name="Kai C."/>
            <person name="Sasaki D."/>
            <person name="Tomaru Y."/>
            <person name="Fukuda S."/>
            <person name="Kanamori-Katayama M."/>
            <person name="Suzuki M."/>
            <person name="Aoki J."/>
            <person name="Arakawa T."/>
            <person name="Iida J."/>
            <person name="Imamura K."/>
            <person name="Itoh M."/>
            <person name="Kato T."/>
            <person name="Kawaji H."/>
            <person name="Kawagashira N."/>
            <person name="Kawashima T."/>
            <person name="Kojima M."/>
            <person name="Kondo S."/>
            <person name="Konno H."/>
            <person name="Nakano K."/>
            <person name="Ninomiya N."/>
            <person name="Nishio T."/>
            <person name="Okada M."/>
            <person name="Plessy C."/>
            <person name="Shibata K."/>
            <person name="Shiraki T."/>
            <person name="Suzuki S."/>
            <person name="Tagami M."/>
            <person name="Waki K."/>
            <person name="Watahiki A."/>
            <person name="Okamura-Oho Y."/>
            <person name="Suzuki H."/>
            <person name="Kawai J."/>
            <person name="Hayashizaki Y."/>
        </authorList>
    </citation>
    <scope>NUCLEOTIDE SEQUENCE [LARGE SCALE MRNA] (ISOFORMS 1A AND 1B)</scope>
    <source>
        <strain>C57BL/6J</strain>
        <tissue>Brain</tissue>
        <tissue>Brain cortex</tissue>
    </source>
</reference>
<reference key="3">
    <citation type="journal article" date="2004" name="Genome Res.">
        <title>The status, quality, and expansion of the NIH full-length cDNA project: the Mammalian Gene Collection (MGC).</title>
        <authorList>
            <consortium name="The MGC Project Team"/>
        </authorList>
    </citation>
    <scope>NUCLEOTIDE SEQUENCE [LARGE SCALE MRNA] (ISOFORM 1A)</scope>
    <source>
        <tissue>Brain</tissue>
    </source>
</reference>
<reference key="4">
    <citation type="submission" date="2007-04" db="UniProtKB">
        <authorList>
            <person name="Lubec G."/>
            <person name="Kang S.U."/>
        </authorList>
    </citation>
    <scope>PROTEIN SEQUENCE OF 11-22 AND 137-148</scope>
    <scope>IDENTIFICATION BY MASS SPECTROMETRY</scope>
    <source>
        <strain>C57BL/6J</strain>
        <tissue>Brain</tissue>
    </source>
</reference>
<reference key="5">
    <citation type="journal article" date="1999" name="Neuron">
        <title>Essential roles in synaptic plasticity for synaptogyrin I and synaptophysin I.</title>
        <authorList>
            <person name="Janz R."/>
            <person name="Suedhof T.C."/>
            <person name="Hammer R.E."/>
            <person name="Unni V."/>
            <person name="Siegelbaum S.A."/>
            <person name="Bolshakov V.Y."/>
        </authorList>
    </citation>
    <scope>FUNCTION</scope>
    <scope>DISRUPTION PHENOTYPE</scope>
</reference>
<reference key="6">
    <citation type="journal article" date="2010" name="Cell">
        <title>A tissue-specific atlas of mouse protein phosphorylation and expression.</title>
        <authorList>
            <person name="Huttlin E.L."/>
            <person name="Jedrychowski M.P."/>
            <person name="Elias J.E."/>
            <person name="Goswami T."/>
            <person name="Rad R."/>
            <person name="Beausoleil S.A."/>
            <person name="Villen J."/>
            <person name="Haas W."/>
            <person name="Sowa M.E."/>
            <person name="Gygi S.P."/>
        </authorList>
    </citation>
    <scope>IDENTIFICATION BY MASS SPECTROMETRY [LARGE SCALE ANALYSIS]</scope>
    <source>
        <tissue>Brain</tissue>
        <tissue>Brown adipose tissue</tissue>
        <tissue>Heart</tissue>
        <tissue>Kidney</tissue>
        <tissue>Lung</tissue>
        <tissue>Spleen</tissue>
        <tissue>Testis</tissue>
    </source>
</reference>
<name>SNG1_MOUSE</name>
<proteinExistence type="evidence at protein level"/>
<gene>
    <name evidence="10" type="primary">Syngr1</name>
</gene>
<evidence type="ECO:0000250" key="1">
    <source>
        <dbReference type="UniProtKB" id="O43759"/>
    </source>
</evidence>
<evidence type="ECO:0000250" key="2">
    <source>
        <dbReference type="UniProtKB" id="Q62876"/>
    </source>
</evidence>
<evidence type="ECO:0000255" key="3"/>
<evidence type="ECO:0000255" key="4">
    <source>
        <dbReference type="PROSITE-ProRule" id="PRU00581"/>
    </source>
</evidence>
<evidence type="ECO:0000256" key="5">
    <source>
        <dbReference type="SAM" id="MobiDB-lite"/>
    </source>
</evidence>
<evidence type="ECO:0000269" key="6">
    <source>
    </source>
</evidence>
<evidence type="ECO:0000303" key="7">
    <source>
    </source>
</evidence>
<evidence type="ECO:0000303" key="8">
    <source>
    </source>
</evidence>
<evidence type="ECO:0000305" key="9"/>
<evidence type="ECO:0000312" key="10">
    <source>
        <dbReference type="MGI" id="MGI:1328323"/>
    </source>
</evidence>
<accession>O55100</accession>
<accession>B9EI16</accession>
<accession>Q543Y5</accession>
<accession>Q9DCB0</accession>
<keyword id="KW-0007">Acetylation</keyword>
<keyword id="KW-0025">Alternative splicing</keyword>
<keyword id="KW-0968">Cytoplasmic vesicle</keyword>
<keyword id="KW-0903">Direct protein sequencing</keyword>
<keyword id="KW-0472">Membrane</keyword>
<keyword id="KW-1185">Reference proteome</keyword>
<keyword id="KW-0770">Synapse</keyword>
<keyword id="KW-0812">Transmembrane</keyword>
<keyword id="KW-1133">Transmembrane helix</keyword>
<protein>
    <recommendedName>
        <fullName evidence="9">Synaptogyrin-1</fullName>
    </recommendedName>
</protein>